<keyword id="KW-0067">ATP-binding</keyword>
<keyword id="KW-0436">Ligase</keyword>
<keyword id="KW-0547">Nucleotide-binding</keyword>
<keyword id="KW-0648">Protein biosynthesis</keyword>
<keyword id="KW-1185">Reference proteome</keyword>
<gene>
    <name evidence="1" type="primary">gatC</name>
    <name type="ordered locus">GSU3383</name>
</gene>
<proteinExistence type="inferred from homology"/>
<feature type="chain" id="PRO_1000016124" description="Aspartyl/glutamyl-tRNA(Asn/Gln) amidotransferase subunit C">
    <location>
        <begin position="1"/>
        <end position="95"/>
    </location>
</feature>
<sequence>MKITRTDVEHVATLARLELTEDEKDRFTGQLDAILAYVEKLNELDTDGIIPTSHAVPVENAFREDEVRPSIGVENALANAPDRVEGFFRVPRVIE</sequence>
<name>GATC_GEOSL</name>
<accession>Q746Y5</accession>
<evidence type="ECO:0000255" key="1">
    <source>
        <dbReference type="HAMAP-Rule" id="MF_00122"/>
    </source>
</evidence>
<dbReference type="EC" id="6.3.5.-" evidence="1"/>
<dbReference type="EMBL" id="AE017180">
    <property type="protein sequence ID" value="AAR36773.1"/>
    <property type="molecule type" value="Genomic_DNA"/>
</dbReference>
<dbReference type="RefSeq" id="NP_954423.1">
    <property type="nucleotide sequence ID" value="NC_002939.5"/>
</dbReference>
<dbReference type="RefSeq" id="WP_010943994.1">
    <property type="nucleotide sequence ID" value="NC_002939.5"/>
</dbReference>
<dbReference type="SMR" id="Q746Y5"/>
<dbReference type="STRING" id="243231.GSU3383"/>
<dbReference type="EnsemblBacteria" id="AAR36773">
    <property type="protein sequence ID" value="AAR36773"/>
    <property type="gene ID" value="GSU3383"/>
</dbReference>
<dbReference type="KEGG" id="gsu:GSU3383"/>
<dbReference type="PATRIC" id="fig|243231.5.peg.3405"/>
<dbReference type="eggNOG" id="COG0721">
    <property type="taxonomic scope" value="Bacteria"/>
</dbReference>
<dbReference type="HOGENOM" id="CLU_105899_1_2_7"/>
<dbReference type="InParanoid" id="Q746Y5"/>
<dbReference type="OrthoDB" id="9813938at2"/>
<dbReference type="Proteomes" id="UP000000577">
    <property type="component" value="Chromosome"/>
</dbReference>
<dbReference type="GO" id="GO:0050566">
    <property type="term" value="F:asparaginyl-tRNA synthase (glutamine-hydrolyzing) activity"/>
    <property type="evidence" value="ECO:0007669"/>
    <property type="project" value="RHEA"/>
</dbReference>
<dbReference type="GO" id="GO:0005524">
    <property type="term" value="F:ATP binding"/>
    <property type="evidence" value="ECO:0007669"/>
    <property type="project" value="UniProtKB-KW"/>
</dbReference>
<dbReference type="GO" id="GO:0050567">
    <property type="term" value="F:glutaminyl-tRNA synthase (glutamine-hydrolyzing) activity"/>
    <property type="evidence" value="ECO:0007669"/>
    <property type="project" value="UniProtKB-UniRule"/>
</dbReference>
<dbReference type="GO" id="GO:0070681">
    <property type="term" value="P:glutaminyl-tRNAGln biosynthesis via transamidation"/>
    <property type="evidence" value="ECO:0000318"/>
    <property type="project" value="GO_Central"/>
</dbReference>
<dbReference type="GO" id="GO:0006450">
    <property type="term" value="P:regulation of translational fidelity"/>
    <property type="evidence" value="ECO:0007669"/>
    <property type="project" value="InterPro"/>
</dbReference>
<dbReference type="GO" id="GO:0006412">
    <property type="term" value="P:translation"/>
    <property type="evidence" value="ECO:0007669"/>
    <property type="project" value="UniProtKB-UniRule"/>
</dbReference>
<dbReference type="Gene3D" id="1.10.20.60">
    <property type="entry name" value="Glu-tRNAGln amidotransferase C subunit, N-terminal domain"/>
    <property type="match status" value="1"/>
</dbReference>
<dbReference type="HAMAP" id="MF_00122">
    <property type="entry name" value="GatC"/>
    <property type="match status" value="1"/>
</dbReference>
<dbReference type="InterPro" id="IPR036113">
    <property type="entry name" value="Asp/Glu-ADT_sf_sub_c"/>
</dbReference>
<dbReference type="InterPro" id="IPR003837">
    <property type="entry name" value="GatC"/>
</dbReference>
<dbReference type="NCBIfam" id="TIGR00135">
    <property type="entry name" value="gatC"/>
    <property type="match status" value="1"/>
</dbReference>
<dbReference type="PANTHER" id="PTHR15004">
    <property type="entry name" value="GLUTAMYL-TRNA(GLN) AMIDOTRANSFERASE SUBUNIT C, MITOCHONDRIAL"/>
    <property type="match status" value="1"/>
</dbReference>
<dbReference type="PANTHER" id="PTHR15004:SF0">
    <property type="entry name" value="GLUTAMYL-TRNA(GLN) AMIDOTRANSFERASE SUBUNIT C, MITOCHONDRIAL"/>
    <property type="match status" value="1"/>
</dbReference>
<dbReference type="Pfam" id="PF02686">
    <property type="entry name" value="GatC"/>
    <property type="match status" value="1"/>
</dbReference>
<dbReference type="SUPFAM" id="SSF141000">
    <property type="entry name" value="Glu-tRNAGln amidotransferase C subunit"/>
    <property type="match status" value="1"/>
</dbReference>
<reference key="1">
    <citation type="journal article" date="2003" name="Science">
        <title>Genome of Geobacter sulfurreducens: metal reduction in subsurface environments.</title>
        <authorList>
            <person name="Methe B.A."/>
            <person name="Nelson K.E."/>
            <person name="Eisen J.A."/>
            <person name="Paulsen I.T."/>
            <person name="Nelson W.C."/>
            <person name="Heidelberg J.F."/>
            <person name="Wu D."/>
            <person name="Wu M."/>
            <person name="Ward N.L."/>
            <person name="Beanan M.J."/>
            <person name="Dodson R.J."/>
            <person name="Madupu R."/>
            <person name="Brinkac L.M."/>
            <person name="Daugherty S.C."/>
            <person name="DeBoy R.T."/>
            <person name="Durkin A.S."/>
            <person name="Gwinn M.L."/>
            <person name="Kolonay J.F."/>
            <person name="Sullivan S.A."/>
            <person name="Haft D.H."/>
            <person name="Selengut J."/>
            <person name="Davidsen T.M."/>
            <person name="Zafar N."/>
            <person name="White O."/>
            <person name="Tran B."/>
            <person name="Romero C."/>
            <person name="Forberger H.A."/>
            <person name="Weidman J.F."/>
            <person name="Khouri H.M."/>
            <person name="Feldblyum T.V."/>
            <person name="Utterback T.R."/>
            <person name="Van Aken S.E."/>
            <person name="Lovley D.R."/>
            <person name="Fraser C.M."/>
        </authorList>
    </citation>
    <scope>NUCLEOTIDE SEQUENCE [LARGE SCALE GENOMIC DNA]</scope>
    <source>
        <strain>ATCC 51573 / DSM 12127 / PCA</strain>
    </source>
</reference>
<organism>
    <name type="scientific">Geobacter sulfurreducens (strain ATCC 51573 / DSM 12127 / PCA)</name>
    <dbReference type="NCBI Taxonomy" id="243231"/>
    <lineage>
        <taxon>Bacteria</taxon>
        <taxon>Pseudomonadati</taxon>
        <taxon>Thermodesulfobacteriota</taxon>
        <taxon>Desulfuromonadia</taxon>
        <taxon>Geobacterales</taxon>
        <taxon>Geobacteraceae</taxon>
        <taxon>Geobacter</taxon>
    </lineage>
</organism>
<comment type="function">
    <text evidence="1">Allows the formation of correctly charged Asn-tRNA(Asn) or Gln-tRNA(Gln) through the transamidation of misacylated Asp-tRNA(Asn) or Glu-tRNA(Gln) in organisms which lack either or both of asparaginyl-tRNA or glutaminyl-tRNA synthetases. The reaction takes place in the presence of glutamine and ATP through an activated phospho-Asp-tRNA(Asn) or phospho-Glu-tRNA(Gln).</text>
</comment>
<comment type="catalytic activity">
    <reaction evidence="1">
        <text>L-glutamyl-tRNA(Gln) + L-glutamine + ATP + H2O = L-glutaminyl-tRNA(Gln) + L-glutamate + ADP + phosphate + H(+)</text>
        <dbReference type="Rhea" id="RHEA:17521"/>
        <dbReference type="Rhea" id="RHEA-COMP:9681"/>
        <dbReference type="Rhea" id="RHEA-COMP:9684"/>
        <dbReference type="ChEBI" id="CHEBI:15377"/>
        <dbReference type="ChEBI" id="CHEBI:15378"/>
        <dbReference type="ChEBI" id="CHEBI:29985"/>
        <dbReference type="ChEBI" id="CHEBI:30616"/>
        <dbReference type="ChEBI" id="CHEBI:43474"/>
        <dbReference type="ChEBI" id="CHEBI:58359"/>
        <dbReference type="ChEBI" id="CHEBI:78520"/>
        <dbReference type="ChEBI" id="CHEBI:78521"/>
        <dbReference type="ChEBI" id="CHEBI:456216"/>
    </reaction>
</comment>
<comment type="catalytic activity">
    <reaction evidence="1">
        <text>L-aspartyl-tRNA(Asn) + L-glutamine + ATP + H2O = L-asparaginyl-tRNA(Asn) + L-glutamate + ADP + phosphate + 2 H(+)</text>
        <dbReference type="Rhea" id="RHEA:14513"/>
        <dbReference type="Rhea" id="RHEA-COMP:9674"/>
        <dbReference type="Rhea" id="RHEA-COMP:9677"/>
        <dbReference type="ChEBI" id="CHEBI:15377"/>
        <dbReference type="ChEBI" id="CHEBI:15378"/>
        <dbReference type="ChEBI" id="CHEBI:29985"/>
        <dbReference type="ChEBI" id="CHEBI:30616"/>
        <dbReference type="ChEBI" id="CHEBI:43474"/>
        <dbReference type="ChEBI" id="CHEBI:58359"/>
        <dbReference type="ChEBI" id="CHEBI:78515"/>
        <dbReference type="ChEBI" id="CHEBI:78516"/>
        <dbReference type="ChEBI" id="CHEBI:456216"/>
    </reaction>
</comment>
<comment type="subunit">
    <text evidence="1">Heterotrimer of A, B and C subunits.</text>
</comment>
<comment type="similarity">
    <text evidence="1">Belongs to the GatC family.</text>
</comment>
<protein>
    <recommendedName>
        <fullName evidence="1">Aspartyl/glutamyl-tRNA(Asn/Gln) amidotransferase subunit C</fullName>
        <shortName evidence="1">Asp/Glu-ADT subunit C</shortName>
        <ecNumber evidence="1">6.3.5.-</ecNumber>
    </recommendedName>
</protein>